<accession>O13548</accession>
<accession>A0A7M4B2U1</accession>
<keyword id="KW-0496">Mitochondrion</keyword>
<keyword id="KW-1185">Reference proteome</keyword>
<name>YP099_YEAST</name>
<protein>
    <recommendedName>
        <fullName evidence="2">Mitochondrial protein YPR099C</fullName>
    </recommendedName>
</protein>
<comment type="function">
    <text evidence="1">Essential for the functional mitochondria and respiratory growth.</text>
</comment>
<comment type="subcellular location">
    <subcellularLocation>
        <location evidence="1">Mitochondrion</location>
    </subcellularLocation>
</comment>
<comment type="disruption phenotype">
    <text evidence="1">Has a respiratory growth defect. Shows partial growth on nonfermentable carbon source.</text>
</comment>
<comment type="miscellaneous">
    <text evidence="1 3">Although initially predicted to be a dubious gene because of an almost complete overlap with MRPL51, it shows transcript and protein level expression.</text>
</comment>
<proteinExistence type="predicted"/>
<evidence type="ECO:0000269" key="1">
    <source>
    </source>
</evidence>
<evidence type="ECO:0000303" key="2">
    <source>
    </source>
</evidence>
<evidence type="ECO:0000305" key="3">
    <source>
    </source>
</evidence>
<sequence length="118" mass="13360">MSPSESFNSFSLFSTLSMFKFLTQITFSRPFVYSALNKGCPDFLITSNCIHGNSWPHLSNLFEVKNFLMPSEDPPQLQNCKVIFLHGNTNAPTPLRPMEFRAIAFTTISPYIRVCVST</sequence>
<reference key="1">
    <citation type="journal article" date="1997" name="Nature">
        <title>The nucleotide sequence of Saccharomyces cerevisiae chromosome XVI.</title>
        <authorList>
            <person name="Bussey H."/>
            <person name="Storms R.K."/>
            <person name="Ahmed A."/>
            <person name="Albermann K."/>
            <person name="Allen E."/>
            <person name="Ansorge W."/>
            <person name="Araujo R."/>
            <person name="Aparicio A."/>
            <person name="Barrell B.G."/>
            <person name="Badcock K."/>
            <person name="Benes V."/>
            <person name="Botstein D."/>
            <person name="Bowman S."/>
            <person name="Brueckner M."/>
            <person name="Carpenter J."/>
            <person name="Cherry J.M."/>
            <person name="Chung E."/>
            <person name="Churcher C.M."/>
            <person name="Coster F."/>
            <person name="Davis K."/>
            <person name="Davis R.W."/>
            <person name="Dietrich F.S."/>
            <person name="Delius H."/>
            <person name="DiPaolo T."/>
            <person name="Dubois E."/>
            <person name="Duesterhoeft A."/>
            <person name="Duncan M."/>
            <person name="Floeth M."/>
            <person name="Fortin N."/>
            <person name="Friesen J.D."/>
            <person name="Fritz C."/>
            <person name="Goffeau A."/>
            <person name="Hall J."/>
            <person name="Hebling U."/>
            <person name="Heumann K."/>
            <person name="Hilbert H."/>
            <person name="Hillier L.W."/>
            <person name="Hunicke-Smith S."/>
            <person name="Hyman R.W."/>
            <person name="Johnston M."/>
            <person name="Kalman S."/>
            <person name="Kleine K."/>
            <person name="Komp C."/>
            <person name="Kurdi O."/>
            <person name="Lashkari D."/>
            <person name="Lew H."/>
            <person name="Lin A."/>
            <person name="Lin D."/>
            <person name="Louis E.J."/>
            <person name="Marathe R."/>
            <person name="Messenguy F."/>
            <person name="Mewes H.-W."/>
            <person name="Mirtipati S."/>
            <person name="Moestl D."/>
            <person name="Mueller-Auer S."/>
            <person name="Namath A."/>
            <person name="Nentwich U."/>
            <person name="Oefner P."/>
            <person name="Pearson D."/>
            <person name="Petel F.X."/>
            <person name="Pohl T.M."/>
            <person name="Purnelle B."/>
            <person name="Rajandream M.A."/>
            <person name="Rechmann S."/>
            <person name="Rieger M."/>
            <person name="Riles L."/>
            <person name="Roberts D."/>
            <person name="Schaefer M."/>
            <person name="Scharfe M."/>
            <person name="Scherens B."/>
            <person name="Schramm S."/>
            <person name="Schroeder M."/>
            <person name="Sdicu A.-M."/>
            <person name="Tettelin H."/>
            <person name="Urrestarazu L.A."/>
            <person name="Ushinsky S."/>
            <person name="Vierendeels F."/>
            <person name="Vissers S."/>
            <person name="Voss H."/>
            <person name="Walsh S.V."/>
            <person name="Wambutt R."/>
            <person name="Wang Y."/>
            <person name="Wedler E."/>
            <person name="Wedler H."/>
            <person name="Winnett E."/>
            <person name="Zhong W.-W."/>
            <person name="Zollner A."/>
            <person name="Vo D.H."/>
            <person name="Hani J."/>
        </authorList>
    </citation>
    <scope>NUCLEOTIDE SEQUENCE [LARGE SCALE GENOMIC DNA]</scope>
    <source>
        <strain>ATCC 204508 / S288c</strain>
    </source>
</reference>
<reference key="2">
    <citation type="journal article" date="2014" name="G3 (Bethesda)">
        <title>The reference genome sequence of Saccharomyces cerevisiae: Then and now.</title>
        <authorList>
            <person name="Engel S.R."/>
            <person name="Dietrich F.S."/>
            <person name="Fisk D.G."/>
            <person name="Binkley G."/>
            <person name="Balakrishnan R."/>
            <person name="Costanzo M.C."/>
            <person name="Dwight S.S."/>
            <person name="Hitz B.C."/>
            <person name="Karra K."/>
            <person name="Nash R.S."/>
            <person name="Weng S."/>
            <person name="Wong E.D."/>
            <person name="Lloyd P."/>
            <person name="Skrzypek M.S."/>
            <person name="Miyasato S.R."/>
            <person name="Simison M."/>
            <person name="Cherry J.M."/>
        </authorList>
    </citation>
    <scope>GENOME REANNOTATION</scope>
    <source>
        <strain>ATCC 204508 / S288c</strain>
    </source>
</reference>
<reference key="3">
    <citation type="journal article" date="2007" name="Genome Res.">
        <title>Approaching a complete repository of sequence-verified protein-encoding clones for Saccharomyces cerevisiae.</title>
        <authorList>
            <person name="Hu Y."/>
            <person name="Rolfs A."/>
            <person name="Bhullar B."/>
            <person name="Murthy T.V.S."/>
            <person name="Zhu C."/>
            <person name="Berger M.F."/>
            <person name="Camargo A.A."/>
            <person name="Kelley F."/>
            <person name="McCarron S."/>
            <person name="Jepson D."/>
            <person name="Richardson A."/>
            <person name="Raphael J."/>
            <person name="Moreira D."/>
            <person name="Taycher E."/>
            <person name="Zuo D."/>
            <person name="Mohr S."/>
            <person name="Kane M.F."/>
            <person name="Williamson J."/>
            <person name="Simpson A.J.G."/>
            <person name="Bulyk M.L."/>
            <person name="Harlow E."/>
            <person name="Marsischky G."/>
            <person name="Kolodner R.D."/>
            <person name="LaBaer J."/>
        </authorList>
    </citation>
    <scope>NUCLEOTIDE SEQUENCE [GENOMIC DNA]</scope>
    <source>
        <strain>ATCC 204508 / S288c</strain>
    </source>
</reference>
<reference key="4">
    <citation type="journal article" date="2019" name="FEMS Yeast Res.">
        <title>Reverse genetic analysis of yeast YPR099C/MRPL51 reveals a critical role of both overlapping ORFs in respiratory growth and MRPL51 in mitochondrial DNA maintenance.</title>
        <authorList>
            <person name="Sahu P.K."/>
            <person name="Salim S."/>
            <person name="Pp M."/>
            <person name="Chauhan S."/>
            <person name="Tomar R.S."/>
        </authorList>
    </citation>
    <scope>FUNCTION</scope>
    <scope>SUBCELLULAR LOCATION</scope>
    <scope>DISRUPTION PHENOTYPE</scope>
</reference>
<feature type="chain" id="PRO_0000299824" description="Mitochondrial protein YPR099C">
    <location>
        <begin position="1"/>
        <end position="118"/>
    </location>
</feature>
<gene>
    <name type="ordered locus">YPR099C</name>
    <name type="ORF">P8283.13A</name>
</gene>
<organism>
    <name type="scientific">Saccharomyces cerevisiae (strain ATCC 204508 / S288c)</name>
    <name type="common">Baker's yeast</name>
    <dbReference type="NCBI Taxonomy" id="559292"/>
    <lineage>
        <taxon>Eukaryota</taxon>
        <taxon>Fungi</taxon>
        <taxon>Dikarya</taxon>
        <taxon>Ascomycota</taxon>
        <taxon>Saccharomycotina</taxon>
        <taxon>Saccharomycetes</taxon>
        <taxon>Saccharomycetales</taxon>
        <taxon>Saccharomycetaceae</taxon>
        <taxon>Saccharomyces</taxon>
    </lineage>
</organism>
<dbReference type="EMBL" id="U32445">
    <property type="protein sequence ID" value="AAB68088.1"/>
    <property type="molecule type" value="Genomic_DNA"/>
</dbReference>
<dbReference type="EMBL" id="AY693278">
    <property type="protein sequence ID" value="AAT93297.1"/>
    <property type="molecule type" value="Genomic_DNA"/>
</dbReference>
<dbReference type="EMBL" id="BK006949">
    <property type="protein sequence ID" value="DAC85312.1"/>
    <property type="molecule type" value="Genomic_DNA"/>
</dbReference>
<dbReference type="PIR" id="S69461">
    <property type="entry name" value="S69461"/>
</dbReference>
<dbReference type="RefSeq" id="NP_001374312.1">
    <property type="nucleotide sequence ID" value="NM_001387383.1"/>
</dbReference>
<dbReference type="DIP" id="DIP-4524N"/>
<dbReference type="FunCoup" id="O13548">
    <property type="interactions" value="18"/>
</dbReference>
<dbReference type="STRING" id="4932.YPR099C"/>
<dbReference type="PaxDb" id="4932-YPR099C"/>
<dbReference type="EnsemblFungi" id="YPR099C_mRNA">
    <property type="protein sequence ID" value="YPR099C"/>
    <property type="gene ID" value="YPR099C"/>
</dbReference>
<dbReference type="GeneID" id="856215"/>
<dbReference type="AGR" id="SGD:S000006303"/>
<dbReference type="SGD" id="S000006303">
    <property type="gene designation" value="YPR099C"/>
</dbReference>
<dbReference type="HOGENOM" id="CLU_2074990_0_0_1"/>
<dbReference type="InParanoid" id="O13548"/>
<dbReference type="PRO" id="PR:O13548"/>
<dbReference type="Proteomes" id="UP000002311">
    <property type="component" value="Chromosome XVI"/>
</dbReference>
<dbReference type="GO" id="GO:0005739">
    <property type="term" value="C:mitochondrion"/>
    <property type="evidence" value="ECO:0000314"/>
    <property type="project" value="SGD"/>
</dbReference>